<keyword id="KW-0067">ATP-binding</keyword>
<keyword id="KW-0227">DNA damage</keyword>
<keyword id="KW-0234">DNA repair</keyword>
<keyword id="KW-0238">DNA-binding</keyword>
<keyword id="KW-0547">Nucleotide-binding</keyword>
<keyword id="KW-1185">Reference proteome</keyword>
<gene>
    <name type="primary">mutS</name>
    <name type="ordered locus">sll1165</name>
</gene>
<dbReference type="EMBL" id="BA000022">
    <property type="protein sequence ID" value="BAA17821.1"/>
    <property type="status" value="ALT_INIT"/>
    <property type="molecule type" value="Genomic_DNA"/>
</dbReference>
<dbReference type="PIR" id="S74860">
    <property type="entry name" value="S74860"/>
</dbReference>
<dbReference type="SMR" id="P73769"/>
<dbReference type="FunCoup" id="P73769">
    <property type="interactions" value="399"/>
</dbReference>
<dbReference type="IntAct" id="P73769">
    <property type="interactions" value="3"/>
</dbReference>
<dbReference type="STRING" id="1148.gene:10498689"/>
<dbReference type="PaxDb" id="1148-1652903"/>
<dbReference type="EnsemblBacteria" id="BAA17821">
    <property type="protein sequence ID" value="BAA17821"/>
    <property type="gene ID" value="BAA17821"/>
</dbReference>
<dbReference type="KEGG" id="syn:sll1165"/>
<dbReference type="eggNOG" id="COG0249">
    <property type="taxonomic scope" value="Bacteria"/>
</dbReference>
<dbReference type="InParanoid" id="P73769"/>
<dbReference type="PhylomeDB" id="P73769"/>
<dbReference type="Proteomes" id="UP000001425">
    <property type="component" value="Chromosome"/>
</dbReference>
<dbReference type="GO" id="GO:0005829">
    <property type="term" value="C:cytosol"/>
    <property type="evidence" value="ECO:0000318"/>
    <property type="project" value="GO_Central"/>
</dbReference>
<dbReference type="GO" id="GO:0005524">
    <property type="term" value="F:ATP binding"/>
    <property type="evidence" value="ECO:0007669"/>
    <property type="project" value="UniProtKB-UniRule"/>
</dbReference>
<dbReference type="GO" id="GO:0140664">
    <property type="term" value="F:ATP-dependent DNA damage sensor activity"/>
    <property type="evidence" value="ECO:0007669"/>
    <property type="project" value="InterPro"/>
</dbReference>
<dbReference type="GO" id="GO:0003684">
    <property type="term" value="F:damaged DNA binding"/>
    <property type="evidence" value="ECO:0007669"/>
    <property type="project" value="UniProtKB-UniRule"/>
</dbReference>
<dbReference type="GO" id="GO:0030983">
    <property type="term" value="F:mismatched DNA binding"/>
    <property type="evidence" value="ECO:0000318"/>
    <property type="project" value="GO_Central"/>
</dbReference>
<dbReference type="GO" id="GO:0006298">
    <property type="term" value="P:mismatch repair"/>
    <property type="evidence" value="ECO:0000318"/>
    <property type="project" value="GO_Central"/>
</dbReference>
<dbReference type="CDD" id="cd03284">
    <property type="entry name" value="ABC_MutS1"/>
    <property type="match status" value="1"/>
</dbReference>
<dbReference type="FunFam" id="1.10.1420.10:FF:000001">
    <property type="entry name" value="DNA mismatch repair protein MutS"/>
    <property type="match status" value="1"/>
</dbReference>
<dbReference type="FunFam" id="3.30.420.110:FF:000034">
    <property type="entry name" value="DNA mismatch repair protein MutS"/>
    <property type="match status" value="1"/>
</dbReference>
<dbReference type="FunFam" id="3.40.50.300:FF:000870">
    <property type="entry name" value="MutS protein homolog 4"/>
    <property type="match status" value="1"/>
</dbReference>
<dbReference type="Gene3D" id="1.10.1420.10">
    <property type="match status" value="2"/>
</dbReference>
<dbReference type="Gene3D" id="3.40.1170.10">
    <property type="entry name" value="DNA repair protein MutS, domain I"/>
    <property type="match status" value="1"/>
</dbReference>
<dbReference type="Gene3D" id="3.30.420.110">
    <property type="entry name" value="MutS, connector domain"/>
    <property type="match status" value="1"/>
</dbReference>
<dbReference type="Gene3D" id="3.40.50.300">
    <property type="entry name" value="P-loop containing nucleotide triphosphate hydrolases"/>
    <property type="match status" value="1"/>
</dbReference>
<dbReference type="HAMAP" id="MF_00096">
    <property type="entry name" value="MutS"/>
    <property type="match status" value="1"/>
</dbReference>
<dbReference type="InterPro" id="IPR005748">
    <property type="entry name" value="DNA_mismatch_repair_MutS"/>
</dbReference>
<dbReference type="InterPro" id="IPR007695">
    <property type="entry name" value="DNA_mismatch_repair_MutS-lik_N"/>
</dbReference>
<dbReference type="InterPro" id="IPR017261">
    <property type="entry name" value="DNA_mismatch_repair_MutS/MSH"/>
</dbReference>
<dbReference type="InterPro" id="IPR000432">
    <property type="entry name" value="DNA_mismatch_repair_MutS_C"/>
</dbReference>
<dbReference type="InterPro" id="IPR007861">
    <property type="entry name" value="DNA_mismatch_repair_MutS_clamp"/>
</dbReference>
<dbReference type="InterPro" id="IPR007696">
    <property type="entry name" value="DNA_mismatch_repair_MutS_core"/>
</dbReference>
<dbReference type="InterPro" id="IPR016151">
    <property type="entry name" value="DNA_mismatch_repair_MutS_N"/>
</dbReference>
<dbReference type="InterPro" id="IPR036187">
    <property type="entry name" value="DNA_mismatch_repair_MutS_sf"/>
</dbReference>
<dbReference type="InterPro" id="IPR007860">
    <property type="entry name" value="DNA_mmatch_repair_MutS_con_dom"/>
</dbReference>
<dbReference type="InterPro" id="IPR045076">
    <property type="entry name" value="MutS"/>
</dbReference>
<dbReference type="InterPro" id="IPR036678">
    <property type="entry name" value="MutS_con_dom_sf"/>
</dbReference>
<dbReference type="InterPro" id="IPR027417">
    <property type="entry name" value="P-loop_NTPase"/>
</dbReference>
<dbReference type="NCBIfam" id="TIGR01070">
    <property type="entry name" value="mutS1"/>
    <property type="match status" value="1"/>
</dbReference>
<dbReference type="NCBIfam" id="NF003810">
    <property type="entry name" value="PRK05399.1"/>
    <property type="match status" value="1"/>
</dbReference>
<dbReference type="PANTHER" id="PTHR11361:SF34">
    <property type="entry name" value="DNA MISMATCH REPAIR PROTEIN MSH1, MITOCHONDRIAL"/>
    <property type="match status" value="1"/>
</dbReference>
<dbReference type="PANTHER" id="PTHR11361">
    <property type="entry name" value="DNA MISMATCH REPAIR PROTEIN MUTS FAMILY MEMBER"/>
    <property type="match status" value="1"/>
</dbReference>
<dbReference type="Pfam" id="PF01624">
    <property type="entry name" value="MutS_I"/>
    <property type="match status" value="1"/>
</dbReference>
<dbReference type="Pfam" id="PF05188">
    <property type="entry name" value="MutS_II"/>
    <property type="match status" value="1"/>
</dbReference>
<dbReference type="Pfam" id="PF05192">
    <property type="entry name" value="MutS_III"/>
    <property type="match status" value="1"/>
</dbReference>
<dbReference type="Pfam" id="PF05190">
    <property type="entry name" value="MutS_IV"/>
    <property type="match status" value="1"/>
</dbReference>
<dbReference type="Pfam" id="PF00488">
    <property type="entry name" value="MutS_V"/>
    <property type="match status" value="1"/>
</dbReference>
<dbReference type="PIRSF" id="PIRSF037677">
    <property type="entry name" value="DNA_mis_repair_Msh6"/>
    <property type="match status" value="1"/>
</dbReference>
<dbReference type="SMART" id="SM00534">
    <property type="entry name" value="MUTSac"/>
    <property type="match status" value="1"/>
</dbReference>
<dbReference type="SMART" id="SM00533">
    <property type="entry name" value="MUTSd"/>
    <property type="match status" value="1"/>
</dbReference>
<dbReference type="SUPFAM" id="SSF55271">
    <property type="entry name" value="DNA repair protein MutS, domain I"/>
    <property type="match status" value="1"/>
</dbReference>
<dbReference type="SUPFAM" id="SSF53150">
    <property type="entry name" value="DNA repair protein MutS, domain II"/>
    <property type="match status" value="1"/>
</dbReference>
<dbReference type="SUPFAM" id="SSF48334">
    <property type="entry name" value="DNA repair protein MutS, domain III"/>
    <property type="match status" value="1"/>
</dbReference>
<dbReference type="SUPFAM" id="SSF52540">
    <property type="entry name" value="P-loop containing nucleoside triphosphate hydrolases"/>
    <property type="match status" value="1"/>
</dbReference>
<dbReference type="PROSITE" id="PS00486">
    <property type="entry name" value="DNA_MISMATCH_REPAIR_2"/>
    <property type="match status" value="1"/>
</dbReference>
<name>MUTS_SYNY3</name>
<proteinExistence type="inferred from homology"/>
<evidence type="ECO:0000250" key="1"/>
<evidence type="ECO:0000255" key="2"/>
<evidence type="ECO:0000305" key="3"/>
<accession>P73769</accession>
<feature type="chain" id="PRO_0000115155" description="DNA mismatch repair protein MutS">
    <location>
        <begin position="1"/>
        <end position="878"/>
    </location>
</feature>
<feature type="binding site" evidence="2">
    <location>
        <begin position="656"/>
        <end position="663"/>
    </location>
    <ligand>
        <name>ATP</name>
        <dbReference type="ChEBI" id="CHEBI:30616"/>
    </ligand>
</feature>
<reference key="1">
    <citation type="journal article" date="1996" name="DNA Res.">
        <title>Sequence analysis of the genome of the unicellular cyanobacterium Synechocystis sp. strain PCC6803. II. Sequence determination of the entire genome and assignment of potential protein-coding regions.</title>
        <authorList>
            <person name="Kaneko T."/>
            <person name="Sato S."/>
            <person name="Kotani H."/>
            <person name="Tanaka A."/>
            <person name="Asamizu E."/>
            <person name="Nakamura Y."/>
            <person name="Miyajima N."/>
            <person name="Hirosawa M."/>
            <person name="Sugiura M."/>
            <person name="Sasamoto S."/>
            <person name="Kimura T."/>
            <person name="Hosouchi T."/>
            <person name="Matsuno A."/>
            <person name="Muraki A."/>
            <person name="Nakazaki N."/>
            <person name="Naruo K."/>
            <person name="Okumura S."/>
            <person name="Shimpo S."/>
            <person name="Takeuchi C."/>
            <person name="Wada T."/>
            <person name="Watanabe A."/>
            <person name="Yamada M."/>
            <person name="Yasuda M."/>
            <person name="Tabata S."/>
        </authorList>
    </citation>
    <scope>NUCLEOTIDE SEQUENCE [LARGE SCALE GENOMIC DNA]</scope>
    <source>
        <strain>ATCC 27184 / PCC 6803 / Kazusa</strain>
    </source>
</reference>
<sequence length="878" mass="97586">MTDTPILGTVKEPQRDYRTLDRQKLTPMFQHYTEVKEQYQGALLLYRVGDFFECFFQDAVIIARELELILTSKEGGKEIGRVAMTGVPHHALDRYARQLVEKGYAVAICDQVEDAAEAQAEKRMVERQVTKLLTPGTLTDDSMLPAKRNNFLAAIAMVEDKWGLAHADISTGEFFTCQSSNLDDLAVELLRLQPSEVLIPTSAPDIRNILRPGEPSEHIPKQLPTSFCYSLRSQAPFSLVEAKQRLLTTFRVKSLEGMGCEGLPLAIRAAGGLLEYIEDTQKAHVVPIQPLKTYGLTDFLVLDHQTRRNLEINQTVRDGSFHGSLLWALDRTSTTMGSRALRRWLLQPLLDLKGIQARQDTIQELYHHPALRQDLRQLLRQIYDLERLTGRIGANTASARDVYGLASSLVRLTDLAELAQEGHSPYLKALQTVPPELEELGKYVLAHIVENPPLHIREGNLIRSGVNPTLDEMRQSLEDDNQWLANLEVTEREKTGIANLKVGYNKAFGYYLSLPRSKSEQAPDNYIRKQTLVNEERYITPELKERETRILTAQADLNQLEYEIFTEVRATVAEKAQPIRDVAKAVAAIDVLAGLAEVAVYQGYCRPIMQMEPGLIDIEAGRHPVVEQSLGAGFFVANDTQLGHDHWHPDLVILTGPNASGKSCYLRQVGLIQLMAQTGSFIPAKTATLSICDRIFTRVGAVDDLATGQSTFMVEMNETANILNHATAKSLVLLDEIGRGTATFDGLAIAWSVAEYLAGEIQARTIFATHYHELNELASLLENVANFQVTVKELPEEIIFLHQVTPGGADKSYGIEAGRLAGLPSSVITRARQVMAQIEKHSKIAVGLRKGNRGKVMASQAAAEAAEDQAKQLDIFGF</sequence>
<protein>
    <recommendedName>
        <fullName>DNA mismatch repair protein MutS</fullName>
    </recommendedName>
</protein>
<comment type="function">
    <text evidence="1">This protein is involved in the repair of mismatches in DNA. It is possible that it carries out the mismatch recognition step. This protein has a weak ATPase activity (By similarity).</text>
</comment>
<comment type="similarity">
    <text evidence="3">Belongs to the DNA mismatch repair MutS family.</text>
</comment>
<comment type="sequence caution" evidence="3">
    <conflict type="erroneous initiation">
        <sequence resource="EMBL-CDS" id="BAA17821"/>
    </conflict>
</comment>
<organism>
    <name type="scientific">Synechocystis sp. (strain ATCC 27184 / PCC 6803 / Kazusa)</name>
    <dbReference type="NCBI Taxonomy" id="1111708"/>
    <lineage>
        <taxon>Bacteria</taxon>
        <taxon>Bacillati</taxon>
        <taxon>Cyanobacteriota</taxon>
        <taxon>Cyanophyceae</taxon>
        <taxon>Synechococcales</taxon>
        <taxon>Merismopediaceae</taxon>
        <taxon>Synechocystis</taxon>
    </lineage>
</organism>